<comment type="function">
    <text evidence="1">Catalyzes the ATP-dependent transfer of a sulfur to tRNA to produce 4-thiouridine in position 8 of tRNAs, which functions as a near-UV photosensor. Also catalyzes the transfer of sulfur to the sulfur carrier protein ThiS, forming ThiS-thiocarboxylate. This is a step in the synthesis of thiazole, in the thiamine biosynthesis pathway. The sulfur is donated as persulfide by IscS.</text>
</comment>
<comment type="catalytic activity">
    <reaction evidence="1">
        <text>[ThiI sulfur-carrier protein]-S-sulfanyl-L-cysteine + a uridine in tRNA + 2 reduced [2Fe-2S]-[ferredoxin] + ATP + H(+) = [ThiI sulfur-carrier protein]-L-cysteine + a 4-thiouridine in tRNA + 2 oxidized [2Fe-2S]-[ferredoxin] + AMP + diphosphate</text>
        <dbReference type="Rhea" id="RHEA:24176"/>
        <dbReference type="Rhea" id="RHEA-COMP:10000"/>
        <dbReference type="Rhea" id="RHEA-COMP:10001"/>
        <dbReference type="Rhea" id="RHEA-COMP:13337"/>
        <dbReference type="Rhea" id="RHEA-COMP:13338"/>
        <dbReference type="Rhea" id="RHEA-COMP:13339"/>
        <dbReference type="Rhea" id="RHEA-COMP:13340"/>
        <dbReference type="ChEBI" id="CHEBI:15378"/>
        <dbReference type="ChEBI" id="CHEBI:29950"/>
        <dbReference type="ChEBI" id="CHEBI:30616"/>
        <dbReference type="ChEBI" id="CHEBI:33019"/>
        <dbReference type="ChEBI" id="CHEBI:33737"/>
        <dbReference type="ChEBI" id="CHEBI:33738"/>
        <dbReference type="ChEBI" id="CHEBI:61963"/>
        <dbReference type="ChEBI" id="CHEBI:65315"/>
        <dbReference type="ChEBI" id="CHEBI:136798"/>
        <dbReference type="ChEBI" id="CHEBI:456215"/>
        <dbReference type="EC" id="2.8.1.4"/>
    </reaction>
</comment>
<comment type="catalytic activity">
    <reaction evidence="1">
        <text>[ThiS sulfur-carrier protein]-C-terminal Gly-Gly-AMP + S-sulfanyl-L-cysteinyl-[cysteine desulfurase] + AH2 = [ThiS sulfur-carrier protein]-C-terminal-Gly-aminoethanethioate + L-cysteinyl-[cysteine desulfurase] + A + AMP + 2 H(+)</text>
        <dbReference type="Rhea" id="RHEA:43340"/>
        <dbReference type="Rhea" id="RHEA-COMP:12157"/>
        <dbReference type="Rhea" id="RHEA-COMP:12158"/>
        <dbReference type="Rhea" id="RHEA-COMP:12910"/>
        <dbReference type="Rhea" id="RHEA-COMP:19908"/>
        <dbReference type="ChEBI" id="CHEBI:13193"/>
        <dbReference type="ChEBI" id="CHEBI:15378"/>
        <dbReference type="ChEBI" id="CHEBI:17499"/>
        <dbReference type="ChEBI" id="CHEBI:29950"/>
        <dbReference type="ChEBI" id="CHEBI:61963"/>
        <dbReference type="ChEBI" id="CHEBI:90618"/>
        <dbReference type="ChEBI" id="CHEBI:232372"/>
        <dbReference type="ChEBI" id="CHEBI:456215"/>
    </reaction>
</comment>
<comment type="pathway">
    <text evidence="1">Cofactor biosynthesis; thiamine diphosphate biosynthesis.</text>
</comment>
<comment type="subcellular location">
    <subcellularLocation>
        <location evidence="1">Cytoplasm</location>
    </subcellularLocation>
</comment>
<comment type="similarity">
    <text evidence="1">Belongs to the ThiI family.</text>
</comment>
<organism>
    <name type="scientific">Salmonella paratyphi B (strain ATCC BAA-1250 / SPB7)</name>
    <dbReference type="NCBI Taxonomy" id="1016998"/>
    <lineage>
        <taxon>Bacteria</taxon>
        <taxon>Pseudomonadati</taxon>
        <taxon>Pseudomonadota</taxon>
        <taxon>Gammaproteobacteria</taxon>
        <taxon>Enterobacterales</taxon>
        <taxon>Enterobacteriaceae</taxon>
        <taxon>Salmonella</taxon>
    </lineage>
</organism>
<protein>
    <recommendedName>
        <fullName evidence="1">tRNA sulfurtransferase</fullName>
        <ecNumber evidence="1">2.8.1.4</ecNumber>
    </recommendedName>
    <alternativeName>
        <fullName evidence="1">Sulfur carrier protein ThiS sulfurtransferase</fullName>
    </alternativeName>
    <alternativeName>
        <fullName evidence="1">Thiamine biosynthesis protein ThiI</fullName>
    </alternativeName>
    <alternativeName>
        <fullName evidence="1">tRNA 4-thiouridine synthase</fullName>
    </alternativeName>
</protein>
<keyword id="KW-0067">ATP-binding</keyword>
<keyword id="KW-0963">Cytoplasm</keyword>
<keyword id="KW-1015">Disulfide bond</keyword>
<keyword id="KW-0547">Nucleotide-binding</keyword>
<keyword id="KW-0676">Redox-active center</keyword>
<keyword id="KW-0694">RNA-binding</keyword>
<keyword id="KW-0784">Thiamine biosynthesis</keyword>
<keyword id="KW-0808">Transferase</keyword>
<keyword id="KW-0820">tRNA-binding</keyword>
<proteinExistence type="inferred from homology"/>
<sequence length="482" mass="54795">MKFIIKLFPEITIKSQSVRLRFIKILTGNIRNVLKHYDETLAVVRHWDNIEVRAKDENQRLAIRDALTRIPGIHHILEVEDVPFTDMHDIFEKALAQYREQLEGKTFCVRVKRRGKHEFSSIEVERYVGGGLNQHIESARVKLTNPDVTVHLEVEDDRLLLIKGRYEGIGGFPIGTQEDVLSLISGGFDSGVSSYMLMRRGCRVHYCFFNLGGAAHEIGVRQVAHYLWNRFGSSHRVRFVAINFEPVVGEILEKVDDGQMGVVLKRMMVRAASKVAERYGVQALVTGEALGQVSSQTLTNLRLIDNVSDTLILRPLISYDKEHIINLARQIGTEDFARTMPEYCGVISKSPTVKAIKAKIEAEEENFDFSILDKVVEEANNVDMREIAQQTQQEVVEVETVSGFGANDVILDIRSVDEQDDKPLKVEGVDVVSLPFYKLSTKFGDLDQSKTWLLWCERGVMSRLQALYLREQGFANVKVYRP</sequence>
<feature type="chain" id="PRO_1000074260" description="tRNA sulfurtransferase">
    <location>
        <begin position="1"/>
        <end position="482"/>
    </location>
</feature>
<feature type="domain" description="THUMP" evidence="1">
    <location>
        <begin position="61"/>
        <end position="165"/>
    </location>
</feature>
<feature type="domain" description="Rhodanese" evidence="1">
    <location>
        <begin position="404"/>
        <end position="482"/>
    </location>
</feature>
<feature type="active site" description="Cysteine persulfide intermediate" evidence="1">
    <location>
        <position position="456"/>
    </location>
</feature>
<feature type="binding site" evidence="1">
    <location>
        <begin position="183"/>
        <end position="184"/>
    </location>
    <ligand>
        <name>ATP</name>
        <dbReference type="ChEBI" id="CHEBI:30616"/>
    </ligand>
</feature>
<feature type="binding site" evidence="1">
    <location>
        <position position="265"/>
    </location>
    <ligand>
        <name>ATP</name>
        <dbReference type="ChEBI" id="CHEBI:30616"/>
    </ligand>
</feature>
<feature type="binding site" evidence="1">
    <location>
        <position position="287"/>
    </location>
    <ligand>
        <name>ATP</name>
        <dbReference type="ChEBI" id="CHEBI:30616"/>
    </ligand>
</feature>
<feature type="binding site" evidence="1">
    <location>
        <position position="296"/>
    </location>
    <ligand>
        <name>ATP</name>
        <dbReference type="ChEBI" id="CHEBI:30616"/>
    </ligand>
</feature>
<feature type="disulfide bond" description="Redox-active" evidence="1">
    <location>
        <begin position="344"/>
        <end position="456"/>
    </location>
</feature>
<evidence type="ECO:0000255" key="1">
    <source>
        <dbReference type="HAMAP-Rule" id="MF_00021"/>
    </source>
</evidence>
<accession>A9MX06</accession>
<reference key="1">
    <citation type="submission" date="2007-11" db="EMBL/GenBank/DDBJ databases">
        <authorList>
            <consortium name="The Salmonella enterica serovar Paratyphi B Genome Sequencing Project"/>
            <person name="McClelland M."/>
            <person name="Sanderson E.K."/>
            <person name="Porwollik S."/>
            <person name="Spieth J."/>
            <person name="Clifton W.S."/>
            <person name="Fulton R."/>
            <person name="Cordes M."/>
            <person name="Wollam A."/>
            <person name="Shah N."/>
            <person name="Pepin K."/>
            <person name="Bhonagiri V."/>
            <person name="Nash W."/>
            <person name="Johnson M."/>
            <person name="Thiruvilangam P."/>
            <person name="Wilson R."/>
        </authorList>
    </citation>
    <scope>NUCLEOTIDE SEQUENCE [LARGE SCALE GENOMIC DNA]</scope>
    <source>
        <strain>ATCC BAA-1250 / SPB7</strain>
    </source>
</reference>
<name>THII_SALPB</name>
<dbReference type="EC" id="2.8.1.4" evidence="1"/>
<dbReference type="EMBL" id="CP000886">
    <property type="protein sequence ID" value="ABX68519.1"/>
    <property type="molecule type" value="Genomic_DNA"/>
</dbReference>
<dbReference type="RefSeq" id="WP_000668653.1">
    <property type="nucleotide sequence ID" value="NC_010102.1"/>
</dbReference>
<dbReference type="SMR" id="A9MX06"/>
<dbReference type="KEGG" id="spq:SPAB_03158"/>
<dbReference type="PATRIC" id="fig|1016998.12.peg.2979"/>
<dbReference type="HOGENOM" id="CLU_037952_4_1_6"/>
<dbReference type="BioCyc" id="SENT1016998:SPAB_RS12895-MONOMER"/>
<dbReference type="UniPathway" id="UPA00060"/>
<dbReference type="Proteomes" id="UP000008556">
    <property type="component" value="Chromosome"/>
</dbReference>
<dbReference type="GO" id="GO:0005829">
    <property type="term" value="C:cytosol"/>
    <property type="evidence" value="ECO:0007669"/>
    <property type="project" value="TreeGrafter"/>
</dbReference>
<dbReference type="GO" id="GO:0005524">
    <property type="term" value="F:ATP binding"/>
    <property type="evidence" value="ECO:0007669"/>
    <property type="project" value="UniProtKB-UniRule"/>
</dbReference>
<dbReference type="GO" id="GO:0004810">
    <property type="term" value="F:CCA tRNA nucleotidyltransferase activity"/>
    <property type="evidence" value="ECO:0007669"/>
    <property type="project" value="InterPro"/>
</dbReference>
<dbReference type="GO" id="GO:0000049">
    <property type="term" value="F:tRNA binding"/>
    <property type="evidence" value="ECO:0007669"/>
    <property type="project" value="UniProtKB-UniRule"/>
</dbReference>
<dbReference type="GO" id="GO:0140741">
    <property type="term" value="F:tRNA-uracil-4 sulfurtransferase activity"/>
    <property type="evidence" value="ECO:0007669"/>
    <property type="project" value="UniProtKB-EC"/>
</dbReference>
<dbReference type="GO" id="GO:0009228">
    <property type="term" value="P:thiamine biosynthetic process"/>
    <property type="evidence" value="ECO:0007669"/>
    <property type="project" value="UniProtKB-KW"/>
</dbReference>
<dbReference type="GO" id="GO:0009229">
    <property type="term" value="P:thiamine diphosphate biosynthetic process"/>
    <property type="evidence" value="ECO:0007669"/>
    <property type="project" value="UniProtKB-UniRule"/>
</dbReference>
<dbReference type="GO" id="GO:0052837">
    <property type="term" value="P:thiazole biosynthetic process"/>
    <property type="evidence" value="ECO:0007669"/>
    <property type="project" value="InterPro"/>
</dbReference>
<dbReference type="GO" id="GO:0002937">
    <property type="term" value="P:tRNA 4-thiouridine biosynthesis"/>
    <property type="evidence" value="ECO:0007669"/>
    <property type="project" value="TreeGrafter"/>
</dbReference>
<dbReference type="CDD" id="cd01712">
    <property type="entry name" value="PPase_ThiI"/>
    <property type="match status" value="1"/>
</dbReference>
<dbReference type="CDD" id="cd00158">
    <property type="entry name" value="RHOD"/>
    <property type="match status" value="1"/>
</dbReference>
<dbReference type="CDD" id="cd11716">
    <property type="entry name" value="THUMP_ThiI"/>
    <property type="match status" value="1"/>
</dbReference>
<dbReference type="FunFam" id="3.30.2130.30:FF:000002">
    <property type="entry name" value="tRNA sulfurtransferase"/>
    <property type="match status" value="1"/>
</dbReference>
<dbReference type="FunFam" id="3.40.250.10:FF:000003">
    <property type="entry name" value="tRNA sulfurtransferase"/>
    <property type="match status" value="1"/>
</dbReference>
<dbReference type="FunFam" id="3.40.50.620:FF:000029">
    <property type="entry name" value="tRNA sulfurtransferase"/>
    <property type="match status" value="1"/>
</dbReference>
<dbReference type="Gene3D" id="3.30.2130.30">
    <property type="match status" value="1"/>
</dbReference>
<dbReference type="Gene3D" id="3.40.50.620">
    <property type="entry name" value="HUPs"/>
    <property type="match status" value="1"/>
</dbReference>
<dbReference type="Gene3D" id="3.40.250.10">
    <property type="entry name" value="Rhodanese-like domain"/>
    <property type="match status" value="1"/>
</dbReference>
<dbReference type="HAMAP" id="MF_00021">
    <property type="entry name" value="ThiI"/>
    <property type="match status" value="1"/>
</dbReference>
<dbReference type="InterPro" id="IPR001763">
    <property type="entry name" value="Rhodanese-like_dom"/>
</dbReference>
<dbReference type="InterPro" id="IPR036873">
    <property type="entry name" value="Rhodanese-like_dom_sf"/>
</dbReference>
<dbReference type="InterPro" id="IPR014729">
    <property type="entry name" value="Rossmann-like_a/b/a_fold"/>
</dbReference>
<dbReference type="InterPro" id="IPR020536">
    <property type="entry name" value="ThiI_AANH"/>
</dbReference>
<dbReference type="InterPro" id="IPR054173">
    <property type="entry name" value="ThiI_fer"/>
</dbReference>
<dbReference type="InterPro" id="IPR049961">
    <property type="entry name" value="ThiI_N"/>
</dbReference>
<dbReference type="InterPro" id="IPR026340">
    <property type="entry name" value="THII_Thiazole_biosynth_dom"/>
</dbReference>
<dbReference type="InterPro" id="IPR004114">
    <property type="entry name" value="THUMP_dom"/>
</dbReference>
<dbReference type="InterPro" id="IPR049962">
    <property type="entry name" value="THUMP_ThiI"/>
</dbReference>
<dbReference type="InterPro" id="IPR003720">
    <property type="entry name" value="tRNA_STrfase"/>
</dbReference>
<dbReference type="InterPro" id="IPR050102">
    <property type="entry name" value="tRNA_sulfurtransferase_ThiI"/>
</dbReference>
<dbReference type="NCBIfam" id="TIGR04271">
    <property type="entry name" value="ThiI_C_thiazole"/>
    <property type="match status" value="1"/>
</dbReference>
<dbReference type="NCBIfam" id="TIGR00342">
    <property type="entry name" value="tRNA uracil 4-sulfurtransferase ThiI"/>
    <property type="match status" value="1"/>
</dbReference>
<dbReference type="PANTHER" id="PTHR43209">
    <property type="entry name" value="TRNA SULFURTRANSFERASE"/>
    <property type="match status" value="1"/>
</dbReference>
<dbReference type="PANTHER" id="PTHR43209:SF1">
    <property type="entry name" value="TRNA SULFURTRANSFERASE"/>
    <property type="match status" value="1"/>
</dbReference>
<dbReference type="Pfam" id="PF02568">
    <property type="entry name" value="ThiI"/>
    <property type="match status" value="1"/>
</dbReference>
<dbReference type="Pfam" id="PF22025">
    <property type="entry name" value="ThiI_fer"/>
    <property type="match status" value="1"/>
</dbReference>
<dbReference type="Pfam" id="PF02926">
    <property type="entry name" value="THUMP"/>
    <property type="match status" value="1"/>
</dbReference>
<dbReference type="SMART" id="SM00981">
    <property type="entry name" value="THUMP"/>
    <property type="match status" value="1"/>
</dbReference>
<dbReference type="SUPFAM" id="SSF52402">
    <property type="entry name" value="Adenine nucleotide alpha hydrolases-like"/>
    <property type="match status" value="1"/>
</dbReference>
<dbReference type="SUPFAM" id="SSF52821">
    <property type="entry name" value="Rhodanese/Cell cycle control phosphatase"/>
    <property type="match status" value="1"/>
</dbReference>
<dbReference type="SUPFAM" id="SSF143437">
    <property type="entry name" value="THUMP domain-like"/>
    <property type="match status" value="1"/>
</dbReference>
<dbReference type="PROSITE" id="PS50206">
    <property type="entry name" value="RHODANESE_3"/>
    <property type="match status" value="1"/>
</dbReference>
<dbReference type="PROSITE" id="PS51165">
    <property type="entry name" value="THUMP"/>
    <property type="match status" value="1"/>
</dbReference>
<gene>
    <name evidence="1" type="primary">thiI</name>
    <name type="ordered locus">SPAB_03158</name>
</gene>